<feature type="chain" id="PRO_0000177370" description="Large ribosomal subunit protein bL35">
    <location>
        <begin position="1"/>
        <end position="66"/>
    </location>
</feature>
<feature type="region of interest" description="Disordered" evidence="2">
    <location>
        <begin position="1"/>
        <end position="20"/>
    </location>
</feature>
<feature type="compositionally biased region" description="Basic residues" evidence="2">
    <location>
        <begin position="1"/>
        <end position="16"/>
    </location>
</feature>
<keyword id="KW-1185">Reference proteome</keyword>
<keyword id="KW-0687">Ribonucleoprotein</keyword>
<keyword id="KW-0689">Ribosomal protein</keyword>
<dbReference type="EMBL" id="AE005176">
    <property type="protein sequence ID" value="AAK05941.1"/>
    <property type="molecule type" value="Genomic_DNA"/>
</dbReference>
<dbReference type="PIR" id="C86855">
    <property type="entry name" value="C86855"/>
</dbReference>
<dbReference type="RefSeq" id="NP_268000.1">
    <property type="nucleotide sequence ID" value="NC_002662.1"/>
</dbReference>
<dbReference type="RefSeq" id="WP_003132353.1">
    <property type="nucleotide sequence ID" value="NC_002662.1"/>
</dbReference>
<dbReference type="SMR" id="Q9CEJ8"/>
<dbReference type="PaxDb" id="272623-L0430"/>
<dbReference type="EnsemblBacteria" id="AAK05941">
    <property type="protein sequence ID" value="AAK05941"/>
    <property type="gene ID" value="L0430"/>
</dbReference>
<dbReference type="GeneID" id="89634064"/>
<dbReference type="KEGG" id="lla:L0430"/>
<dbReference type="PATRIC" id="fig|272623.7.peg.1974"/>
<dbReference type="eggNOG" id="COG0291">
    <property type="taxonomic scope" value="Bacteria"/>
</dbReference>
<dbReference type="HOGENOM" id="CLU_169643_3_0_9"/>
<dbReference type="OrthoDB" id="47476at2"/>
<dbReference type="Proteomes" id="UP000002196">
    <property type="component" value="Chromosome"/>
</dbReference>
<dbReference type="GO" id="GO:0022625">
    <property type="term" value="C:cytosolic large ribosomal subunit"/>
    <property type="evidence" value="ECO:0007669"/>
    <property type="project" value="TreeGrafter"/>
</dbReference>
<dbReference type="GO" id="GO:0003735">
    <property type="term" value="F:structural constituent of ribosome"/>
    <property type="evidence" value="ECO:0007669"/>
    <property type="project" value="InterPro"/>
</dbReference>
<dbReference type="GO" id="GO:0006412">
    <property type="term" value="P:translation"/>
    <property type="evidence" value="ECO:0007669"/>
    <property type="project" value="UniProtKB-UniRule"/>
</dbReference>
<dbReference type="FunFam" id="4.10.410.60:FF:000001">
    <property type="entry name" value="50S ribosomal protein L35"/>
    <property type="match status" value="1"/>
</dbReference>
<dbReference type="Gene3D" id="4.10.410.60">
    <property type="match status" value="1"/>
</dbReference>
<dbReference type="HAMAP" id="MF_00514">
    <property type="entry name" value="Ribosomal_bL35"/>
    <property type="match status" value="1"/>
</dbReference>
<dbReference type="InterPro" id="IPR001706">
    <property type="entry name" value="Ribosomal_bL35"/>
</dbReference>
<dbReference type="InterPro" id="IPR021137">
    <property type="entry name" value="Ribosomal_bL35-like"/>
</dbReference>
<dbReference type="InterPro" id="IPR018265">
    <property type="entry name" value="Ribosomal_bL35_CS"/>
</dbReference>
<dbReference type="InterPro" id="IPR037229">
    <property type="entry name" value="Ribosomal_bL35_sf"/>
</dbReference>
<dbReference type="NCBIfam" id="TIGR00001">
    <property type="entry name" value="rpmI_bact"/>
    <property type="match status" value="1"/>
</dbReference>
<dbReference type="PANTHER" id="PTHR33343">
    <property type="entry name" value="54S RIBOSOMAL PROTEIN BL35M"/>
    <property type="match status" value="1"/>
</dbReference>
<dbReference type="PANTHER" id="PTHR33343:SF1">
    <property type="entry name" value="LARGE RIBOSOMAL SUBUNIT PROTEIN BL35M"/>
    <property type="match status" value="1"/>
</dbReference>
<dbReference type="Pfam" id="PF01632">
    <property type="entry name" value="Ribosomal_L35p"/>
    <property type="match status" value="1"/>
</dbReference>
<dbReference type="PRINTS" id="PR00064">
    <property type="entry name" value="RIBOSOMALL35"/>
</dbReference>
<dbReference type="SUPFAM" id="SSF143034">
    <property type="entry name" value="L35p-like"/>
    <property type="match status" value="1"/>
</dbReference>
<dbReference type="PROSITE" id="PS00936">
    <property type="entry name" value="RIBOSOMAL_L35"/>
    <property type="match status" value="1"/>
</dbReference>
<sequence length="66" mass="7876">MPKQKTHRASAKRFKRTGNGGLKRFRAYTSHRFHGKTVKQRRQLRKSSMVSKGDFKRIRRMVATMR</sequence>
<reference key="1">
    <citation type="journal article" date="2001" name="Genome Res.">
        <title>The complete genome sequence of the lactic acid bacterium Lactococcus lactis ssp. lactis IL1403.</title>
        <authorList>
            <person name="Bolotin A."/>
            <person name="Wincker P."/>
            <person name="Mauger S."/>
            <person name="Jaillon O."/>
            <person name="Malarme K."/>
            <person name="Weissenbach J."/>
            <person name="Ehrlich S.D."/>
            <person name="Sorokin A."/>
        </authorList>
    </citation>
    <scope>NUCLEOTIDE SEQUENCE [LARGE SCALE GENOMIC DNA]</scope>
    <source>
        <strain>IL1403</strain>
    </source>
</reference>
<gene>
    <name evidence="1" type="primary">rpmI</name>
    <name type="ordered locus">LL1843</name>
    <name type="ORF">L0430</name>
</gene>
<accession>Q9CEJ8</accession>
<evidence type="ECO:0000255" key="1">
    <source>
        <dbReference type="HAMAP-Rule" id="MF_00514"/>
    </source>
</evidence>
<evidence type="ECO:0000256" key="2">
    <source>
        <dbReference type="SAM" id="MobiDB-lite"/>
    </source>
</evidence>
<evidence type="ECO:0000305" key="3"/>
<organism>
    <name type="scientific">Lactococcus lactis subsp. lactis (strain IL1403)</name>
    <name type="common">Streptococcus lactis</name>
    <dbReference type="NCBI Taxonomy" id="272623"/>
    <lineage>
        <taxon>Bacteria</taxon>
        <taxon>Bacillati</taxon>
        <taxon>Bacillota</taxon>
        <taxon>Bacilli</taxon>
        <taxon>Lactobacillales</taxon>
        <taxon>Streptococcaceae</taxon>
        <taxon>Lactococcus</taxon>
    </lineage>
</organism>
<comment type="similarity">
    <text evidence="1">Belongs to the bacterial ribosomal protein bL35 family.</text>
</comment>
<protein>
    <recommendedName>
        <fullName evidence="1">Large ribosomal subunit protein bL35</fullName>
    </recommendedName>
    <alternativeName>
        <fullName evidence="3">50S ribosomal protein L35</fullName>
    </alternativeName>
</protein>
<proteinExistence type="inferred from homology"/>
<name>RL35_LACLA</name>